<reference evidence="4" key="1">
    <citation type="thesis" date="2005" institute="University of Alcala" country="Spain">
        <title>Peroxidase of Aloe barbadensis m.: characterization and function.</title>
        <authorList>
            <person name="Esteban A."/>
        </authorList>
    </citation>
    <scope>PROTEIN SEQUENCE</scope>
    <scope>CATALYTIC ACTIVITY</scope>
    <scope>GLYCOSYLATION</scope>
    <source>
        <tissue evidence="2">Leaf</tissue>
    </source>
</reference>
<organism>
    <name type="scientific">Aloe vera</name>
    <name type="common">Aloe</name>
    <name type="synonym">Aloe barbadensis</name>
    <dbReference type="NCBI Taxonomy" id="34199"/>
    <lineage>
        <taxon>Eukaryota</taxon>
        <taxon>Viridiplantae</taxon>
        <taxon>Streptophyta</taxon>
        <taxon>Embryophyta</taxon>
        <taxon>Tracheophyta</taxon>
        <taxon>Spermatophyta</taxon>
        <taxon>Magnoliopsida</taxon>
        <taxon>Liliopsida</taxon>
        <taxon>Asparagales</taxon>
        <taxon>Asphodelaceae</taxon>
        <taxon>Asphodeloideae</taxon>
        <taxon>Aloe</taxon>
    </lineage>
</organism>
<feature type="chain" id="PRO_0000055602" description="Peroxidase B">
    <location>
        <begin position="1" status="less than"/>
        <end position="188" status="greater than"/>
    </location>
</feature>
<feature type="non-consecutive residues" evidence="3">
    <location>
        <begin position="8"/>
        <end position="9"/>
    </location>
</feature>
<feature type="non-consecutive residues" evidence="3">
    <location>
        <begin position="15"/>
        <end position="16"/>
    </location>
</feature>
<feature type="non-consecutive residues" evidence="3">
    <location>
        <begin position="34"/>
        <end position="35"/>
    </location>
</feature>
<feature type="non-consecutive residues" evidence="3">
    <location>
        <begin position="54"/>
        <end position="55"/>
    </location>
</feature>
<feature type="non-consecutive residues" evidence="3">
    <location>
        <begin position="69"/>
        <end position="70"/>
    </location>
</feature>
<feature type="non-consecutive residues" evidence="3">
    <location>
        <begin position="99"/>
        <end position="100"/>
    </location>
</feature>
<feature type="non-consecutive residues" evidence="3">
    <location>
        <begin position="123"/>
        <end position="124"/>
    </location>
</feature>
<feature type="non-consecutive residues" evidence="3">
    <location>
        <begin position="142"/>
        <end position="143"/>
    </location>
</feature>
<feature type="non-consecutive residues" evidence="3">
    <location>
        <begin position="162"/>
        <end position="163"/>
    </location>
</feature>
<feature type="non-terminal residue" evidence="3">
    <location>
        <position position="1"/>
    </location>
</feature>
<feature type="non-terminal residue" evidence="3">
    <location>
        <position position="188"/>
    </location>
</feature>
<name>PERB_ALOVR</name>
<dbReference type="EC" id="1.11.1.7"/>
<dbReference type="GO" id="GO:0005576">
    <property type="term" value="C:extracellular region"/>
    <property type="evidence" value="ECO:0007669"/>
    <property type="project" value="UniProtKB-SubCell"/>
</dbReference>
<dbReference type="GO" id="GO:0140825">
    <property type="term" value="F:lactoperoxidase activity"/>
    <property type="evidence" value="ECO:0007669"/>
    <property type="project" value="UniProtKB-EC"/>
</dbReference>
<dbReference type="GO" id="GO:0042744">
    <property type="term" value="P:hydrogen peroxide catabolic process"/>
    <property type="evidence" value="ECO:0007669"/>
    <property type="project" value="UniProtKB-KW"/>
</dbReference>
<keyword id="KW-0903">Direct protein sequencing</keyword>
<keyword id="KW-0325">Glycoprotein</keyword>
<keyword id="KW-0376">Hydrogen peroxide</keyword>
<keyword id="KW-0560">Oxidoreductase</keyword>
<keyword id="KW-0575">Peroxidase</keyword>
<keyword id="KW-0964">Secreted</keyword>
<sequence>VEMACPGKVSCLGDKAITVLSENNPLTGTKGEIRMGDGFNVEEEIEKVLEQVGKTTFDVALYASGSWKKPQPLAVMVATLAVMQVRDVVWLSALAMACRLLMDTFAEKYFLQPVLQPSYELFKNAGSNMDGTVTSFDNIYYKTNSWASPLSIRGGYPMHSTSNMGSQIYQDNPVANCLDLSSLDLANR</sequence>
<protein>
    <recommendedName>
        <fullName>Peroxidase B</fullName>
        <ecNumber>1.11.1.7</ecNumber>
    </recommendedName>
</protein>
<accession>P84753</accession>
<proteinExistence type="evidence at protein level"/>
<comment type="catalytic activity">
    <reaction evidence="2">
        <text>2 a phenolic donor + H2O2 = 2 a phenolic radical donor + 2 H2O</text>
        <dbReference type="Rhea" id="RHEA:56136"/>
        <dbReference type="ChEBI" id="CHEBI:15377"/>
        <dbReference type="ChEBI" id="CHEBI:16240"/>
        <dbReference type="ChEBI" id="CHEBI:139520"/>
        <dbReference type="ChEBI" id="CHEBI:139521"/>
        <dbReference type="EC" id="1.11.1.7"/>
    </reaction>
</comment>
<comment type="subcellular location">
    <subcellularLocation>
        <location evidence="1">Secreted</location>
    </subcellularLocation>
</comment>
<comment type="PTM">
    <text evidence="2">Partially N-glycosylated.</text>
</comment>
<comment type="similarity">
    <text evidence="4">Belongs to the peroxidase family.</text>
</comment>
<comment type="caution">
    <text evidence="4">The order of the peptides shown is unknown.</text>
</comment>
<evidence type="ECO:0000255" key="1">
    <source>
        <dbReference type="PROSITE-ProRule" id="PRU00297"/>
    </source>
</evidence>
<evidence type="ECO:0000269" key="2">
    <source ref="1"/>
</evidence>
<evidence type="ECO:0000303" key="3">
    <source ref="1"/>
</evidence>
<evidence type="ECO:0000305" key="4"/>